<feature type="chain" id="PRO_1000065664" description="Undecaprenyl-phosphate 4-deoxy-4-formamido-L-arabinose transferase">
    <location>
        <begin position="1"/>
        <end position="327"/>
    </location>
</feature>
<feature type="transmembrane region" description="Helical" evidence="1">
    <location>
        <begin position="235"/>
        <end position="255"/>
    </location>
</feature>
<feature type="transmembrane region" description="Helical" evidence="1">
    <location>
        <begin position="270"/>
        <end position="290"/>
    </location>
</feature>
<dbReference type="EC" id="2.4.2.53" evidence="1"/>
<dbReference type="EMBL" id="CP000668">
    <property type="protein sequence ID" value="ABP39135.1"/>
    <property type="molecule type" value="Genomic_DNA"/>
</dbReference>
<dbReference type="RefSeq" id="WP_011192543.1">
    <property type="nucleotide sequence ID" value="NZ_CP009715.1"/>
</dbReference>
<dbReference type="SMR" id="A4TIM3"/>
<dbReference type="CAZy" id="GT2">
    <property type="family name" value="Glycosyltransferase Family 2"/>
</dbReference>
<dbReference type="GeneID" id="49785666"/>
<dbReference type="KEGG" id="ypp:YPDSF_0729"/>
<dbReference type="PATRIC" id="fig|386656.14.peg.3140"/>
<dbReference type="UniPathway" id="UPA00030"/>
<dbReference type="UniPathway" id="UPA00036">
    <property type="reaction ID" value="UER00495"/>
</dbReference>
<dbReference type="GO" id="GO:0005886">
    <property type="term" value="C:plasma membrane"/>
    <property type="evidence" value="ECO:0007669"/>
    <property type="project" value="UniProtKB-SubCell"/>
</dbReference>
<dbReference type="GO" id="GO:0016780">
    <property type="term" value="F:phosphotransferase activity, for other substituted phosphate groups"/>
    <property type="evidence" value="ECO:0007669"/>
    <property type="project" value="UniProtKB-UniRule"/>
</dbReference>
<dbReference type="GO" id="GO:0099621">
    <property type="term" value="F:undecaprenyl-phosphate 4-deoxy-4-formamido-L-arabinose transferase activity"/>
    <property type="evidence" value="ECO:0007669"/>
    <property type="project" value="UniProtKB-EC"/>
</dbReference>
<dbReference type="GO" id="GO:0036108">
    <property type="term" value="P:4-amino-4-deoxy-alpha-L-arabinopyranosyl undecaprenyl phosphate biosynthetic process"/>
    <property type="evidence" value="ECO:0007669"/>
    <property type="project" value="UniProtKB-UniRule"/>
</dbReference>
<dbReference type="GO" id="GO:0009245">
    <property type="term" value="P:lipid A biosynthetic process"/>
    <property type="evidence" value="ECO:0007669"/>
    <property type="project" value="UniProtKB-UniRule"/>
</dbReference>
<dbReference type="GO" id="GO:0009103">
    <property type="term" value="P:lipopolysaccharide biosynthetic process"/>
    <property type="evidence" value="ECO:0007669"/>
    <property type="project" value="UniProtKB-UniRule"/>
</dbReference>
<dbReference type="GO" id="GO:0046677">
    <property type="term" value="P:response to antibiotic"/>
    <property type="evidence" value="ECO:0007669"/>
    <property type="project" value="UniProtKB-KW"/>
</dbReference>
<dbReference type="CDD" id="cd04187">
    <property type="entry name" value="DPM1_like_bac"/>
    <property type="match status" value="1"/>
</dbReference>
<dbReference type="FunFam" id="3.90.550.10:FF:000019">
    <property type="entry name" value="Undecaprenyl-phosphate 4-deoxy-4-formamido-L-arabinose transferase"/>
    <property type="match status" value="1"/>
</dbReference>
<dbReference type="Gene3D" id="3.90.550.10">
    <property type="entry name" value="Spore Coat Polysaccharide Biosynthesis Protein SpsA, Chain A"/>
    <property type="match status" value="1"/>
</dbReference>
<dbReference type="HAMAP" id="MF_01164">
    <property type="entry name" value="ArnC_transfer"/>
    <property type="match status" value="1"/>
</dbReference>
<dbReference type="InterPro" id="IPR022857">
    <property type="entry name" value="ArnC_tfrase"/>
</dbReference>
<dbReference type="InterPro" id="IPR001173">
    <property type="entry name" value="Glyco_trans_2-like"/>
</dbReference>
<dbReference type="InterPro" id="IPR050256">
    <property type="entry name" value="Glycosyltransferase_2"/>
</dbReference>
<dbReference type="InterPro" id="IPR029044">
    <property type="entry name" value="Nucleotide-diphossugar_trans"/>
</dbReference>
<dbReference type="NCBIfam" id="NF007986">
    <property type="entry name" value="PRK10714.1"/>
    <property type="match status" value="1"/>
</dbReference>
<dbReference type="PANTHER" id="PTHR48090:SF3">
    <property type="entry name" value="UNDECAPRENYL-PHOSPHATE 4-DEOXY-4-FORMAMIDO-L-ARABINOSE TRANSFERASE"/>
    <property type="match status" value="1"/>
</dbReference>
<dbReference type="PANTHER" id="PTHR48090">
    <property type="entry name" value="UNDECAPRENYL-PHOSPHATE 4-DEOXY-4-FORMAMIDO-L-ARABINOSE TRANSFERASE-RELATED"/>
    <property type="match status" value="1"/>
</dbReference>
<dbReference type="Pfam" id="PF00535">
    <property type="entry name" value="Glycos_transf_2"/>
    <property type="match status" value="1"/>
</dbReference>
<dbReference type="SUPFAM" id="SSF53448">
    <property type="entry name" value="Nucleotide-diphospho-sugar transferases"/>
    <property type="match status" value="1"/>
</dbReference>
<gene>
    <name evidence="1" type="primary">arnC</name>
    <name type="ordered locus">YPDSF_0729</name>
</gene>
<keyword id="KW-0046">Antibiotic resistance</keyword>
<keyword id="KW-0997">Cell inner membrane</keyword>
<keyword id="KW-1003">Cell membrane</keyword>
<keyword id="KW-0328">Glycosyltransferase</keyword>
<keyword id="KW-0441">Lipid A biosynthesis</keyword>
<keyword id="KW-0444">Lipid biosynthesis</keyword>
<keyword id="KW-0443">Lipid metabolism</keyword>
<keyword id="KW-0448">Lipopolysaccharide biosynthesis</keyword>
<keyword id="KW-0472">Membrane</keyword>
<keyword id="KW-0808">Transferase</keyword>
<keyword id="KW-0812">Transmembrane</keyword>
<keyword id="KW-1133">Transmembrane helix</keyword>
<reference key="1">
    <citation type="submission" date="2007-02" db="EMBL/GenBank/DDBJ databases">
        <title>Complete sequence of chromosome of Yersinia pestis Pestoides F.</title>
        <authorList>
            <consortium name="US DOE Joint Genome Institute"/>
            <person name="Copeland A."/>
            <person name="Lucas S."/>
            <person name="Lapidus A."/>
            <person name="Barry K."/>
            <person name="Detter J.C."/>
            <person name="Glavina del Rio T."/>
            <person name="Hammon N."/>
            <person name="Israni S."/>
            <person name="Dalin E."/>
            <person name="Tice H."/>
            <person name="Pitluck S."/>
            <person name="Di Bartolo G."/>
            <person name="Chain P."/>
            <person name="Malfatti S."/>
            <person name="Shin M."/>
            <person name="Vergez L."/>
            <person name="Schmutz J."/>
            <person name="Larimer F."/>
            <person name="Land M."/>
            <person name="Hauser L."/>
            <person name="Worsham P."/>
            <person name="Chu M."/>
            <person name="Bearden S."/>
            <person name="Garcia E."/>
            <person name="Richardson P."/>
        </authorList>
    </citation>
    <scope>NUCLEOTIDE SEQUENCE [LARGE SCALE GENOMIC DNA]</scope>
    <source>
        <strain>Pestoides F</strain>
    </source>
</reference>
<organism>
    <name type="scientific">Yersinia pestis (strain Pestoides F)</name>
    <dbReference type="NCBI Taxonomy" id="386656"/>
    <lineage>
        <taxon>Bacteria</taxon>
        <taxon>Pseudomonadati</taxon>
        <taxon>Pseudomonadota</taxon>
        <taxon>Gammaproteobacteria</taxon>
        <taxon>Enterobacterales</taxon>
        <taxon>Yersiniaceae</taxon>
        <taxon>Yersinia</taxon>
    </lineage>
</organism>
<accession>A4TIM3</accession>
<sequence length="327" mass="36433">MSLNEPIKKVSIVIPVYNEQESLPALIDRTTAACKLLTQAYEIILVDDGSSDNSTELLTAAANDPDSHIIAILLNRNYGQHSAIMAGFNQVSGDLIITLDADLQNPPEEIPRLVHVAEEGYDVVGTVRANRQDSLFRKTASRMINMMIQRATGKSMGDYGCMLRAYRRHIVEAMLHCHERSTFIPILANTFARRTTEITVHHAEREFGNSKYSLMRLINLMYDLITCLTTTPLRLLSLVGSAIALLGFTFSVLLVALRLIFGPEWAGGGVFTLFAVLFMFIGAQFVGMGLLGEYIGRIYNDVRARPRYFVQKVVGAEQTENNQDVEK</sequence>
<evidence type="ECO:0000255" key="1">
    <source>
        <dbReference type="HAMAP-Rule" id="MF_01164"/>
    </source>
</evidence>
<name>ARNC_YERPP</name>
<comment type="function">
    <text evidence="1">Catalyzes the transfer of 4-deoxy-4-formamido-L-arabinose from UDP to undecaprenyl phosphate. The modified arabinose is attached to lipid A and is required for resistance to polymyxin and cationic antimicrobial peptides.</text>
</comment>
<comment type="catalytic activity">
    <reaction evidence="1">
        <text>UDP-4-deoxy-4-formamido-beta-L-arabinose + di-trans,octa-cis-undecaprenyl phosphate = 4-deoxy-4-formamido-alpha-L-arabinopyranosyl di-trans,octa-cis-undecaprenyl phosphate + UDP</text>
        <dbReference type="Rhea" id="RHEA:27722"/>
        <dbReference type="ChEBI" id="CHEBI:58223"/>
        <dbReference type="ChEBI" id="CHEBI:58709"/>
        <dbReference type="ChEBI" id="CHEBI:58909"/>
        <dbReference type="ChEBI" id="CHEBI:60392"/>
        <dbReference type="EC" id="2.4.2.53"/>
    </reaction>
</comment>
<comment type="pathway">
    <text evidence="1">Glycolipid biosynthesis; 4-amino-4-deoxy-alpha-L-arabinose undecaprenyl phosphate biosynthesis; 4-amino-4-deoxy-alpha-L-arabinose undecaprenyl phosphate from UDP-4-deoxy-4-formamido-beta-L-arabinose and undecaprenyl phosphate: step 1/2.</text>
</comment>
<comment type="pathway">
    <text evidence="1">Bacterial outer membrane biogenesis; lipopolysaccharide biosynthesis.</text>
</comment>
<comment type="subcellular location">
    <subcellularLocation>
        <location evidence="1">Cell inner membrane</location>
        <topology evidence="1">Multi-pass membrane protein</topology>
    </subcellularLocation>
</comment>
<comment type="similarity">
    <text evidence="1">Belongs to the glycosyltransferase 2 family.</text>
</comment>
<proteinExistence type="inferred from homology"/>
<protein>
    <recommendedName>
        <fullName evidence="1">Undecaprenyl-phosphate 4-deoxy-4-formamido-L-arabinose transferase</fullName>
        <ecNumber evidence="1">2.4.2.53</ecNumber>
    </recommendedName>
    <alternativeName>
        <fullName evidence="1">Undecaprenyl-phosphate Ara4FN transferase</fullName>
        <shortName evidence="1">Ara4FN transferase</shortName>
    </alternativeName>
</protein>